<proteinExistence type="evidence at protein level"/>
<feature type="chain" id="PRO_0000333203" description="Intraflagellar transport protein 70A2">
    <location>
        <begin position="1"/>
        <end position="664"/>
    </location>
</feature>
<feature type="repeat" description="TPR 1">
    <location>
        <begin position="11"/>
        <end position="44"/>
    </location>
</feature>
<feature type="repeat" description="TPR 2">
    <location>
        <begin position="45"/>
        <end position="78"/>
    </location>
</feature>
<feature type="repeat" description="TPR 3">
    <location>
        <begin position="153"/>
        <end position="186"/>
    </location>
</feature>
<feature type="repeat" description="TPR 4">
    <location>
        <begin position="188"/>
        <end position="220"/>
    </location>
</feature>
<feature type="repeat" description="TPR 5">
    <location>
        <begin position="395"/>
        <end position="423"/>
    </location>
</feature>
<feature type="repeat" description="TPR 6">
    <location>
        <begin position="424"/>
        <end position="456"/>
    </location>
</feature>
<feature type="repeat" description="TPR 7">
    <location>
        <begin position="458"/>
        <end position="491"/>
    </location>
</feature>
<feature type="repeat" description="TPR 8">
    <location>
        <begin position="543"/>
        <end position="576"/>
    </location>
</feature>
<feature type="coiled-coil region" evidence="2">
    <location>
        <begin position="507"/>
        <end position="534"/>
    </location>
</feature>
<organism>
    <name type="scientific">Mus musculus</name>
    <name type="common">Mouse</name>
    <dbReference type="NCBI Taxonomy" id="10090"/>
    <lineage>
        <taxon>Eukaryota</taxon>
        <taxon>Metazoa</taxon>
        <taxon>Chordata</taxon>
        <taxon>Craniata</taxon>
        <taxon>Vertebrata</taxon>
        <taxon>Euteleostomi</taxon>
        <taxon>Mammalia</taxon>
        <taxon>Eutheria</taxon>
        <taxon>Euarchontoglires</taxon>
        <taxon>Glires</taxon>
        <taxon>Rodentia</taxon>
        <taxon>Myomorpha</taxon>
        <taxon>Muroidea</taxon>
        <taxon>Muridae</taxon>
        <taxon>Murinae</taxon>
        <taxon>Mus</taxon>
        <taxon>Mus</taxon>
    </lineage>
</organism>
<accession>A2AKQ8</accession>
<accession>B2RXQ0</accession>
<sequence>MAGLSNSQIPDGEFTAVVYRLIRDSRYSEAVQLLSAELQRSSRSRAGLSLLAYCYYRLQEFELAAECYEQLSQMHPELEQYRLYQAQALYKACLYPEATRVAFLLDNPTFYSRVLRLQAAIKYSEGDLPGARSLVEQLLSGEAGEDSGGENDPDGLVNMGCLLYKEGHYEAACSKFFAALQASGYQPDVSYNLALACYSNRHYAPALKHIANIIERGIRQHPELGVGMTTEGIDVRSVGNTVVLHQTALVEAFNLKAAIEYQLRNYEAAQEALTDMPPRAEEELDPVTLHNQALMNMDAKPTEGFEKLQFLLQQNPFPPETFGNLLLLYCKYEYFDLAADVLAENAHLTYKFLTPYLYDFLDAMITCQTAPEEAFIKLDGLAGMLTEQLRRLTKQVQEARHNRDDEVVIKAVNEYDETLEKYIPVLMAQAKIYWNLENYPMVEKIFRKSVEFCNDHDVWKLNVAHVLFMQENKYKEAIGFYEPIVKKNYDNILSVSAIVLANLCVSYIMTSQNEEAEELMRKIEKEEEQLSYGDPDKKIYHLCIVNLVIGTLYCAKGNYDFGISRVIKSLEPYHKKLGTDTWYYAKRCFLSLLENMSKHTIMLRDSVIQECVQFLEHCEIFGRNIPAVIEQPLEEERMHIGKNTVTYESRQLKALIYEIIGWNM</sequence>
<name>I70A2_MOUSE</name>
<comment type="function">
    <text evidence="1">Required for polyglutamylation of axonemal tubulin. Plays a role in anterograde intraflagellar transport (IFT), the process by which cilia precursors are transported from the base of the cilium to the site of their incorporation at the tip.</text>
</comment>
<comment type="subunit">
    <text evidence="3">Interacts wit the IFT B complex component IFT52.</text>
</comment>
<comment type="subcellular location">
    <subcellularLocation>
        <location evidence="1">Cell projection</location>
        <location evidence="1">Cilium</location>
    </subcellularLocation>
</comment>
<comment type="similarity">
    <text evidence="4">Belongs to the TTC30/dfy-1/fleer family.</text>
</comment>
<evidence type="ECO:0000250" key="1"/>
<evidence type="ECO:0000255" key="2"/>
<evidence type="ECO:0000269" key="3">
    <source>
    </source>
</evidence>
<evidence type="ECO:0000305" key="4"/>
<keyword id="KW-0966">Cell projection</keyword>
<keyword id="KW-0969">Cilium</keyword>
<keyword id="KW-0970">Cilium biogenesis/degradation</keyword>
<keyword id="KW-0175">Coiled coil</keyword>
<keyword id="KW-1185">Reference proteome</keyword>
<keyword id="KW-0677">Repeat</keyword>
<keyword id="KW-0802">TPR repeat</keyword>
<reference key="1">
    <citation type="journal article" date="2009" name="PLoS Biol.">
        <title>Lineage-specific biology revealed by a finished genome assembly of the mouse.</title>
        <authorList>
            <person name="Church D.M."/>
            <person name="Goodstadt L."/>
            <person name="Hillier L.W."/>
            <person name="Zody M.C."/>
            <person name="Goldstein S."/>
            <person name="She X."/>
            <person name="Bult C.J."/>
            <person name="Agarwala R."/>
            <person name="Cherry J.L."/>
            <person name="DiCuccio M."/>
            <person name="Hlavina W."/>
            <person name="Kapustin Y."/>
            <person name="Meric P."/>
            <person name="Maglott D."/>
            <person name="Birtle Z."/>
            <person name="Marques A.C."/>
            <person name="Graves T."/>
            <person name="Zhou S."/>
            <person name="Teague B."/>
            <person name="Potamousis K."/>
            <person name="Churas C."/>
            <person name="Place M."/>
            <person name="Herschleb J."/>
            <person name="Runnheim R."/>
            <person name="Forrest D."/>
            <person name="Amos-Landgraf J."/>
            <person name="Schwartz D.C."/>
            <person name="Cheng Z."/>
            <person name="Lindblad-Toh K."/>
            <person name="Eichler E.E."/>
            <person name="Ponting C.P."/>
        </authorList>
    </citation>
    <scope>NUCLEOTIDE SEQUENCE [LARGE SCALE GENOMIC DNA]</scope>
    <source>
        <strain>C57BL/6J</strain>
    </source>
</reference>
<reference key="2">
    <citation type="submission" date="2005-07" db="EMBL/GenBank/DDBJ databases">
        <authorList>
            <person name="Mural R.J."/>
            <person name="Adams M.D."/>
            <person name="Myers E.W."/>
            <person name="Smith H.O."/>
            <person name="Venter J.C."/>
        </authorList>
    </citation>
    <scope>NUCLEOTIDE SEQUENCE [LARGE SCALE GENOMIC DNA]</scope>
</reference>
<reference key="3">
    <citation type="journal article" date="2004" name="Genome Res.">
        <title>The status, quality, and expansion of the NIH full-length cDNA project: the Mammalian Gene Collection (MGC).</title>
        <authorList>
            <consortium name="The MGC Project Team"/>
        </authorList>
    </citation>
    <scope>NUCLEOTIDE SEQUENCE [LARGE SCALE MRNA]</scope>
</reference>
<reference key="4">
    <citation type="journal article" date="2010" name="Cell">
        <title>A tissue-specific atlas of mouse protein phosphorylation and expression.</title>
        <authorList>
            <person name="Huttlin E.L."/>
            <person name="Jedrychowski M.P."/>
            <person name="Elias J.E."/>
            <person name="Goswami T."/>
            <person name="Rad R."/>
            <person name="Beausoleil S.A."/>
            <person name="Villen J."/>
            <person name="Haas W."/>
            <person name="Sowa M.E."/>
            <person name="Gygi S.P."/>
        </authorList>
    </citation>
    <scope>IDENTIFICATION BY MASS SPECTROMETRY [LARGE SCALE ANALYSIS]</scope>
    <source>
        <tissue>Testis</tissue>
    </source>
</reference>
<reference key="5">
    <citation type="journal article" date="2013" name="Exp. Cell Res.">
        <title>Interaction of mouse TTC30/DYF-1 with multiple intraflagellar transport complex B proteins and KIF17.</title>
        <authorList>
            <person name="Howard P.W."/>
            <person name="Jue S.F."/>
            <person name="Maurer R.A."/>
        </authorList>
    </citation>
    <scope>INTERACTION WITH IFT52</scope>
</reference>
<protein>
    <recommendedName>
        <fullName>Intraflagellar transport protein 70A2</fullName>
    </recommendedName>
    <alternativeName>
        <fullName>Tetratricopeptide repeat protein 30A2</fullName>
        <shortName>TPR repeat protein 30A2</shortName>
    </alternativeName>
</protein>
<dbReference type="EMBL" id="AL772341">
    <property type="status" value="NOT_ANNOTATED_CDS"/>
    <property type="molecule type" value="Genomic_DNA"/>
</dbReference>
<dbReference type="EMBL" id="CH466519">
    <property type="protein sequence ID" value="EDL27200.1"/>
    <property type="molecule type" value="Genomic_DNA"/>
</dbReference>
<dbReference type="EMBL" id="BC157934">
    <property type="protein sequence ID" value="AAI57935.1"/>
    <property type="molecule type" value="mRNA"/>
</dbReference>
<dbReference type="EMBL" id="BC158130">
    <property type="protein sequence ID" value="AAI58131.1"/>
    <property type="molecule type" value="mRNA"/>
</dbReference>
<dbReference type="EMBL" id="BC172090">
    <property type="protein sequence ID" value="AAI72090.1"/>
    <property type="molecule type" value="mRNA"/>
</dbReference>
<dbReference type="CCDS" id="CCDS38151.1"/>
<dbReference type="RefSeq" id="NP_001074697.1">
    <property type="nucleotide sequence ID" value="NM_001081228.1"/>
</dbReference>
<dbReference type="SMR" id="A2AKQ8"/>
<dbReference type="BioGRID" id="547754">
    <property type="interactions" value="5"/>
</dbReference>
<dbReference type="FunCoup" id="A2AKQ8">
    <property type="interactions" value="87"/>
</dbReference>
<dbReference type="STRING" id="10090.ENSMUSP00000097575"/>
<dbReference type="GlyGen" id="A2AKQ8">
    <property type="glycosylation" value="1 site, 1 N-linked glycan (1 site)"/>
</dbReference>
<dbReference type="iPTMnet" id="A2AKQ8"/>
<dbReference type="PhosphoSitePlus" id="A2AKQ8"/>
<dbReference type="SwissPalm" id="A2AKQ8"/>
<dbReference type="PaxDb" id="10090-ENSMUSP00000097575"/>
<dbReference type="ProteomicsDB" id="253460"/>
<dbReference type="Pumba" id="A2AKQ8"/>
<dbReference type="Ensembl" id="ENSMUST00000099995.5">
    <property type="protein sequence ID" value="ENSMUSP00000097575.4"/>
    <property type="gene ID" value="ENSMUSG00000075272.5"/>
</dbReference>
<dbReference type="GeneID" id="620631"/>
<dbReference type="KEGG" id="mmu:620631"/>
<dbReference type="AGR" id="MGI:3700200"/>
<dbReference type="CTD" id="620631"/>
<dbReference type="MGI" id="MGI:3700200">
    <property type="gene designation" value="Ift70a2"/>
</dbReference>
<dbReference type="VEuPathDB" id="HostDB:ENSMUSG00000075272"/>
<dbReference type="eggNOG" id="KOG4340">
    <property type="taxonomic scope" value="Eukaryota"/>
</dbReference>
<dbReference type="GeneTree" id="ENSGT00390000010116"/>
<dbReference type="HOGENOM" id="CLU_023760_0_0_1"/>
<dbReference type="InParanoid" id="A2AKQ8"/>
<dbReference type="OMA" id="CCKHELY"/>
<dbReference type="OrthoDB" id="10249577at2759"/>
<dbReference type="PhylomeDB" id="A2AKQ8"/>
<dbReference type="TreeFam" id="TF314592"/>
<dbReference type="Reactome" id="R-MMU-5620924">
    <property type="pathway name" value="Intraflagellar transport"/>
</dbReference>
<dbReference type="BioGRID-ORCS" id="620631">
    <property type="hits" value="3 hits in 76 CRISPR screens"/>
</dbReference>
<dbReference type="PRO" id="PR:A2AKQ8"/>
<dbReference type="Proteomes" id="UP000000589">
    <property type="component" value="Chromosome 2"/>
</dbReference>
<dbReference type="RNAct" id="A2AKQ8">
    <property type="molecule type" value="protein"/>
</dbReference>
<dbReference type="Bgee" id="ENSMUSG00000075272">
    <property type="expression patterns" value="Expressed in spermatocyte and 47 other cell types or tissues"/>
</dbReference>
<dbReference type="GO" id="GO:0005929">
    <property type="term" value="C:cilium"/>
    <property type="evidence" value="ECO:0007669"/>
    <property type="project" value="UniProtKB-SubCell"/>
</dbReference>
<dbReference type="GO" id="GO:0030992">
    <property type="term" value="C:intraciliary transport particle B"/>
    <property type="evidence" value="ECO:0000314"/>
    <property type="project" value="MGI"/>
</dbReference>
<dbReference type="GO" id="GO:0042073">
    <property type="term" value="P:intraciliary transport"/>
    <property type="evidence" value="ECO:0000305"/>
    <property type="project" value="MGI"/>
</dbReference>
<dbReference type="FunFam" id="1.25.40.10:FF:000226">
    <property type="entry name" value="Tetratricopeptide repeat protein 30A"/>
    <property type="match status" value="1"/>
</dbReference>
<dbReference type="FunFam" id="1.25.40.10:FF:000211">
    <property type="entry name" value="tetratricopeptide repeat protein 30B"/>
    <property type="match status" value="1"/>
</dbReference>
<dbReference type="Gene3D" id="1.25.40.10">
    <property type="entry name" value="Tetratricopeptide repeat domain"/>
    <property type="match status" value="2"/>
</dbReference>
<dbReference type="InterPro" id="IPR011990">
    <property type="entry name" value="TPR-like_helical_dom_sf"/>
</dbReference>
<dbReference type="InterPro" id="IPR019734">
    <property type="entry name" value="TPR_rpt"/>
</dbReference>
<dbReference type="InterPro" id="IPR039941">
    <property type="entry name" value="TT30"/>
</dbReference>
<dbReference type="PANTHER" id="PTHR20931:SF4">
    <property type="entry name" value="INTRAFLAGELLAR TRANSPORT PROTEIN 70A2"/>
    <property type="match status" value="1"/>
</dbReference>
<dbReference type="PANTHER" id="PTHR20931">
    <property type="entry name" value="TETRATRICOPEPTIDE REPEAT PROTEIN 30"/>
    <property type="match status" value="1"/>
</dbReference>
<dbReference type="SMART" id="SM00028">
    <property type="entry name" value="TPR"/>
    <property type="match status" value="4"/>
</dbReference>
<dbReference type="SUPFAM" id="SSF48452">
    <property type="entry name" value="TPR-like"/>
    <property type="match status" value="2"/>
</dbReference>
<gene>
    <name type="primary">Ift70a2</name>
    <name type="synonym">Ttc30a2</name>
</gene>